<reference key="1">
    <citation type="submission" date="2007-11" db="EMBL/GenBank/DDBJ databases">
        <title>Complete sequence of chromosome of Shewanella baltica OS195.</title>
        <authorList>
            <consortium name="US DOE Joint Genome Institute"/>
            <person name="Copeland A."/>
            <person name="Lucas S."/>
            <person name="Lapidus A."/>
            <person name="Barry K."/>
            <person name="Glavina del Rio T."/>
            <person name="Dalin E."/>
            <person name="Tice H."/>
            <person name="Pitluck S."/>
            <person name="Chain P."/>
            <person name="Malfatti S."/>
            <person name="Shin M."/>
            <person name="Vergez L."/>
            <person name="Schmutz J."/>
            <person name="Larimer F."/>
            <person name="Land M."/>
            <person name="Hauser L."/>
            <person name="Kyrpides N."/>
            <person name="Kim E."/>
            <person name="Brettar I."/>
            <person name="Rodrigues J."/>
            <person name="Konstantinidis K."/>
            <person name="Klappenbach J."/>
            <person name="Hofle M."/>
            <person name="Tiedje J."/>
            <person name="Richardson P."/>
        </authorList>
    </citation>
    <scope>NUCLEOTIDE SEQUENCE [LARGE SCALE GENOMIC DNA]</scope>
    <source>
        <strain>OS195</strain>
    </source>
</reference>
<gene>
    <name evidence="1" type="primary">hldE</name>
    <name type="ordered locus">Sbal195_0946</name>
</gene>
<sequence>MKVSLPAFEKARVLVVGDVMLDRYWVGPTGRISPEAPVPVVKINQVEDRPGGAANVALNIATLGGQVQLAGLVGQDDTAHALTLGVQTLGVEPQWLTIADKPTITKLRVLSRNQQLIRLDFEEAFDKADSVRLLKQSEALLDSVDVVVLSDYAKGAIDQPRDFIALARAKGVMVLVDPKGSDFGRYQGASLITPNMSEFEAVVGTVTSEADLLEKARGLLKQHHFDAILVTRSEKGMTLVTANAPELHIPTVAREVYDVTGAGDTVISALATSLAAGADLPQACAIANTAAGVVVGKLGTSTVSRIELIEALALHHGESGFGVVSEDQLAYALEQAKLRGERVVMTNGCFDILHAGHVSYLKQAKALGDRLIVAVNDDASVKRLKGDGRPVNQVDRRMAVLAGLASVDWVVPFSEDTPQRIITRLLPNLLVKGGDYKLEDIAGGAEVIAAGGQVQVLGFEDGISTTAIIQNIMANQ</sequence>
<proteinExistence type="inferred from homology"/>
<comment type="function">
    <text evidence="1">Catalyzes the phosphorylation of D-glycero-D-manno-heptose 7-phosphate at the C-1 position to selectively form D-glycero-beta-D-manno-heptose-1,7-bisphosphate.</text>
</comment>
<comment type="function">
    <text evidence="1">Catalyzes the ADP transfer from ATP to D-glycero-beta-D-manno-heptose 1-phosphate, yielding ADP-D-glycero-beta-D-manno-heptose.</text>
</comment>
<comment type="catalytic activity">
    <reaction evidence="1">
        <text>D-glycero-beta-D-manno-heptose 7-phosphate + ATP = D-glycero-beta-D-manno-heptose 1,7-bisphosphate + ADP + H(+)</text>
        <dbReference type="Rhea" id="RHEA:27473"/>
        <dbReference type="ChEBI" id="CHEBI:15378"/>
        <dbReference type="ChEBI" id="CHEBI:30616"/>
        <dbReference type="ChEBI" id="CHEBI:60204"/>
        <dbReference type="ChEBI" id="CHEBI:60208"/>
        <dbReference type="ChEBI" id="CHEBI:456216"/>
        <dbReference type="EC" id="2.7.1.167"/>
    </reaction>
</comment>
<comment type="catalytic activity">
    <reaction evidence="1">
        <text>D-glycero-beta-D-manno-heptose 1-phosphate + ATP + H(+) = ADP-D-glycero-beta-D-manno-heptose + diphosphate</text>
        <dbReference type="Rhea" id="RHEA:27465"/>
        <dbReference type="ChEBI" id="CHEBI:15378"/>
        <dbReference type="ChEBI" id="CHEBI:30616"/>
        <dbReference type="ChEBI" id="CHEBI:33019"/>
        <dbReference type="ChEBI" id="CHEBI:59967"/>
        <dbReference type="ChEBI" id="CHEBI:61593"/>
        <dbReference type="EC" id="2.7.7.70"/>
    </reaction>
</comment>
<comment type="pathway">
    <text evidence="1">Nucleotide-sugar biosynthesis; ADP-L-glycero-beta-D-manno-heptose biosynthesis; ADP-L-glycero-beta-D-manno-heptose from D-glycero-beta-D-manno-heptose 7-phosphate: step 1/4.</text>
</comment>
<comment type="pathway">
    <text evidence="1">Nucleotide-sugar biosynthesis; ADP-L-glycero-beta-D-manno-heptose biosynthesis; ADP-L-glycero-beta-D-manno-heptose from D-glycero-beta-D-manno-heptose 7-phosphate: step 3/4.</text>
</comment>
<comment type="subunit">
    <text evidence="1">Homodimer.</text>
</comment>
<comment type="similarity">
    <text evidence="1">In the N-terminal section; belongs to the carbohydrate kinase PfkB family.</text>
</comment>
<comment type="similarity">
    <text evidence="1">In the C-terminal section; belongs to the cytidylyltransferase family.</text>
</comment>
<evidence type="ECO:0000255" key="1">
    <source>
        <dbReference type="HAMAP-Rule" id="MF_01603"/>
    </source>
</evidence>
<name>HLDE_SHEB9</name>
<accession>A9L2P0</accession>
<feature type="chain" id="PRO_1000088024" description="Bifunctional protein HldE">
    <location>
        <begin position="1"/>
        <end position="476"/>
    </location>
</feature>
<feature type="region of interest" description="Ribokinase">
    <location>
        <begin position="1"/>
        <end position="319"/>
    </location>
</feature>
<feature type="region of interest" description="Cytidylyltransferase">
    <location>
        <begin position="345"/>
        <end position="476"/>
    </location>
</feature>
<feature type="active site" evidence="1">
    <location>
        <position position="264"/>
    </location>
</feature>
<feature type="binding site" evidence="1">
    <location>
        <begin position="195"/>
        <end position="198"/>
    </location>
    <ligand>
        <name>ATP</name>
        <dbReference type="ChEBI" id="CHEBI:30616"/>
    </ligand>
</feature>
<organism>
    <name type="scientific">Shewanella baltica (strain OS195)</name>
    <dbReference type="NCBI Taxonomy" id="399599"/>
    <lineage>
        <taxon>Bacteria</taxon>
        <taxon>Pseudomonadati</taxon>
        <taxon>Pseudomonadota</taxon>
        <taxon>Gammaproteobacteria</taxon>
        <taxon>Alteromonadales</taxon>
        <taxon>Shewanellaceae</taxon>
        <taxon>Shewanella</taxon>
    </lineage>
</organism>
<protein>
    <recommendedName>
        <fullName evidence="1">Bifunctional protein HldE</fullName>
    </recommendedName>
    <domain>
        <recommendedName>
            <fullName evidence="1">D-beta-D-heptose 7-phosphate kinase</fullName>
            <ecNumber evidence="1">2.7.1.167</ecNumber>
        </recommendedName>
        <alternativeName>
            <fullName evidence="1">D-beta-D-heptose 7-phosphotransferase</fullName>
        </alternativeName>
        <alternativeName>
            <fullName evidence="1">D-glycero-beta-D-manno-heptose-7-phosphate kinase</fullName>
        </alternativeName>
    </domain>
    <domain>
        <recommendedName>
            <fullName evidence="1">D-beta-D-heptose 1-phosphate adenylyltransferase</fullName>
            <ecNumber evidence="1">2.7.7.70</ecNumber>
        </recommendedName>
        <alternativeName>
            <fullName evidence="1">D-glycero-beta-D-manno-heptose 1-phosphate adenylyltransferase</fullName>
        </alternativeName>
    </domain>
</protein>
<dbReference type="EC" id="2.7.1.167" evidence="1"/>
<dbReference type="EC" id="2.7.7.70" evidence="1"/>
<dbReference type="EMBL" id="CP000891">
    <property type="protein sequence ID" value="ABX48122.1"/>
    <property type="molecule type" value="Genomic_DNA"/>
</dbReference>
<dbReference type="RefSeq" id="WP_006085938.1">
    <property type="nucleotide sequence ID" value="NC_009997.1"/>
</dbReference>
<dbReference type="SMR" id="A9L2P0"/>
<dbReference type="GeneID" id="11774603"/>
<dbReference type="KEGG" id="sbn:Sbal195_0946"/>
<dbReference type="HOGENOM" id="CLU_021150_2_1_6"/>
<dbReference type="UniPathway" id="UPA00356">
    <property type="reaction ID" value="UER00437"/>
</dbReference>
<dbReference type="UniPathway" id="UPA00356">
    <property type="reaction ID" value="UER00439"/>
</dbReference>
<dbReference type="Proteomes" id="UP000000770">
    <property type="component" value="Chromosome"/>
</dbReference>
<dbReference type="GO" id="GO:0005829">
    <property type="term" value="C:cytosol"/>
    <property type="evidence" value="ECO:0007669"/>
    <property type="project" value="TreeGrafter"/>
</dbReference>
<dbReference type="GO" id="GO:0005524">
    <property type="term" value="F:ATP binding"/>
    <property type="evidence" value="ECO:0007669"/>
    <property type="project" value="UniProtKB-UniRule"/>
</dbReference>
<dbReference type="GO" id="GO:0033785">
    <property type="term" value="F:heptose 7-phosphate kinase activity"/>
    <property type="evidence" value="ECO:0007669"/>
    <property type="project" value="UniProtKB-UniRule"/>
</dbReference>
<dbReference type="GO" id="GO:0033786">
    <property type="term" value="F:heptose-1-phosphate adenylyltransferase activity"/>
    <property type="evidence" value="ECO:0007669"/>
    <property type="project" value="UniProtKB-UniRule"/>
</dbReference>
<dbReference type="GO" id="GO:0016773">
    <property type="term" value="F:phosphotransferase activity, alcohol group as acceptor"/>
    <property type="evidence" value="ECO:0007669"/>
    <property type="project" value="InterPro"/>
</dbReference>
<dbReference type="GO" id="GO:0097171">
    <property type="term" value="P:ADP-L-glycero-beta-D-manno-heptose biosynthetic process"/>
    <property type="evidence" value="ECO:0007669"/>
    <property type="project" value="UniProtKB-UniPathway"/>
</dbReference>
<dbReference type="CDD" id="cd01172">
    <property type="entry name" value="RfaE_like"/>
    <property type="match status" value="1"/>
</dbReference>
<dbReference type="FunFam" id="3.40.1190.20:FF:000002">
    <property type="entry name" value="Bifunctional protein HldE"/>
    <property type="match status" value="1"/>
</dbReference>
<dbReference type="FunFam" id="3.40.50.620:FF:000028">
    <property type="entry name" value="Bifunctional protein HldE"/>
    <property type="match status" value="1"/>
</dbReference>
<dbReference type="Gene3D" id="3.40.1190.20">
    <property type="match status" value="1"/>
</dbReference>
<dbReference type="Gene3D" id="3.40.50.620">
    <property type="entry name" value="HUPs"/>
    <property type="match status" value="1"/>
</dbReference>
<dbReference type="HAMAP" id="MF_01603">
    <property type="entry name" value="HldE"/>
    <property type="match status" value="1"/>
</dbReference>
<dbReference type="InterPro" id="IPR023030">
    <property type="entry name" value="Bifunc_HldE"/>
</dbReference>
<dbReference type="InterPro" id="IPR002173">
    <property type="entry name" value="Carboh/pur_kinase_PfkB_CS"/>
</dbReference>
<dbReference type="InterPro" id="IPR004821">
    <property type="entry name" value="Cyt_trans-like"/>
</dbReference>
<dbReference type="InterPro" id="IPR011611">
    <property type="entry name" value="PfkB_dom"/>
</dbReference>
<dbReference type="InterPro" id="IPR011913">
    <property type="entry name" value="RfaE_dom_I"/>
</dbReference>
<dbReference type="InterPro" id="IPR011914">
    <property type="entry name" value="RfaE_dom_II"/>
</dbReference>
<dbReference type="InterPro" id="IPR029056">
    <property type="entry name" value="Ribokinase-like"/>
</dbReference>
<dbReference type="InterPro" id="IPR014729">
    <property type="entry name" value="Rossmann-like_a/b/a_fold"/>
</dbReference>
<dbReference type="NCBIfam" id="TIGR00125">
    <property type="entry name" value="cyt_tran_rel"/>
    <property type="match status" value="1"/>
</dbReference>
<dbReference type="NCBIfam" id="NF008454">
    <property type="entry name" value="PRK11316.1"/>
    <property type="match status" value="1"/>
</dbReference>
<dbReference type="NCBIfam" id="TIGR02198">
    <property type="entry name" value="rfaE_dom_I"/>
    <property type="match status" value="1"/>
</dbReference>
<dbReference type="NCBIfam" id="TIGR02199">
    <property type="entry name" value="rfaE_dom_II"/>
    <property type="match status" value="1"/>
</dbReference>
<dbReference type="PANTHER" id="PTHR46969">
    <property type="entry name" value="BIFUNCTIONAL PROTEIN HLDE"/>
    <property type="match status" value="1"/>
</dbReference>
<dbReference type="PANTHER" id="PTHR46969:SF1">
    <property type="entry name" value="BIFUNCTIONAL PROTEIN HLDE"/>
    <property type="match status" value="1"/>
</dbReference>
<dbReference type="Pfam" id="PF01467">
    <property type="entry name" value="CTP_transf_like"/>
    <property type="match status" value="1"/>
</dbReference>
<dbReference type="Pfam" id="PF00294">
    <property type="entry name" value="PfkB"/>
    <property type="match status" value="1"/>
</dbReference>
<dbReference type="SUPFAM" id="SSF52374">
    <property type="entry name" value="Nucleotidylyl transferase"/>
    <property type="match status" value="1"/>
</dbReference>
<dbReference type="SUPFAM" id="SSF53613">
    <property type="entry name" value="Ribokinase-like"/>
    <property type="match status" value="1"/>
</dbReference>
<dbReference type="PROSITE" id="PS00583">
    <property type="entry name" value="PFKB_KINASES_1"/>
    <property type="match status" value="1"/>
</dbReference>
<dbReference type="PROSITE" id="PS00584">
    <property type="entry name" value="PFKB_KINASES_2"/>
    <property type="match status" value="1"/>
</dbReference>
<keyword id="KW-0067">ATP-binding</keyword>
<keyword id="KW-0119">Carbohydrate metabolism</keyword>
<keyword id="KW-0418">Kinase</keyword>
<keyword id="KW-0511">Multifunctional enzyme</keyword>
<keyword id="KW-0547">Nucleotide-binding</keyword>
<keyword id="KW-0548">Nucleotidyltransferase</keyword>
<keyword id="KW-0808">Transferase</keyword>